<accession>P10463</accession>
<reference key="1">
    <citation type="journal article" date="1989" name="EMBO J.">
        <title>Cloning and sequencing of a calcium-binding protein regulated by cyclic AMP in the thyroid.</title>
        <authorList>
            <person name="Lefort A."/>
            <person name="Lecocq R."/>
            <person name="Libert F."/>
            <person name="Lamy F."/>
            <person name="Swillens S."/>
            <person name="Vassart G."/>
            <person name="Dumont J.E."/>
        </authorList>
    </citation>
    <scope>NUCLEOTIDE SEQUENCE [MRNA]</scope>
    <scope>CALCIUM-BINDING</scope>
    <scope>PHOSPHORYLATION</scope>
    <scope>TISSUE SPECIFICITY</scope>
</reference>
<dbReference type="EMBL" id="X14479">
    <property type="protein sequence ID" value="CAA32641.1"/>
    <property type="molecule type" value="mRNA"/>
</dbReference>
<dbReference type="EMBL" id="X14047">
    <property type="protein sequence ID" value="CAA32205.1"/>
    <property type="molecule type" value="mRNA"/>
</dbReference>
<dbReference type="PIR" id="S03635">
    <property type="entry name" value="S03635"/>
</dbReference>
<dbReference type="RefSeq" id="NP_001003282.1">
    <property type="nucleotide sequence ID" value="NM_001003282.1"/>
</dbReference>
<dbReference type="SMR" id="P10463"/>
<dbReference type="FunCoup" id="P10463">
    <property type="interactions" value="8"/>
</dbReference>
<dbReference type="STRING" id="9615.ENSCAFP00000027658"/>
<dbReference type="PaxDb" id="9612-ENSCAFP00000027658"/>
<dbReference type="Ensembl" id="ENSCAFT00000029761.4">
    <property type="protein sequence ID" value="ENSCAFP00000027658.4"/>
    <property type="gene ID" value="ENSCAFG00000018746.4"/>
</dbReference>
<dbReference type="Ensembl" id="ENSCAFT00040046870.1">
    <property type="protein sequence ID" value="ENSCAFP00040040913.1"/>
    <property type="gene ID" value="ENSCAFG00040025138.1"/>
</dbReference>
<dbReference type="Ensembl" id="ENSCAFT00845021759.1">
    <property type="protein sequence ID" value="ENSCAFP00845017110.1"/>
    <property type="gene ID" value="ENSCAFG00845012225.1"/>
</dbReference>
<dbReference type="GeneID" id="403965"/>
<dbReference type="KEGG" id="cfa:403965"/>
<dbReference type="CTD" id="828"/>
<dbReference type="VEuPathDB" id="HostDB:ENSCAFG00845012225"/>
<dbReference type="VGNC" id="VGNC:54265">
    <property type="gene designation" value="CAPS"/>
</dbReference>
<dbReference type="eggNOG" id="KOG0032">
    <property type="taxonomic scope" value="Eukaryota"/>
</dbReference>
<dbReference type="GeneTree" id="ENSGT00940000162442"/>
<dbReference type="InParanoid" id="P10463"/>
<dbReference type="OrthoDB" id="444540at2759"/>
<dbReference type="Proteomes" id="UP000002254">
    <property type="component" value="Chromosome 20"/>
</dbReference>
<dbReference type="Proteomes" id="UP000694429">
    <property type="component" value="Unplaced"/>
</dbReference>
<dbReference type="Proteomes" id="UP000694542">
    <property type="component" value="Chromosome 20"/>
</dbReference>
<dbReference type="Proteomes" id="UP000805418">
    <property type="component" value="Chromosome 20"/>
</dbReference>
<dbReference type="GO" id="GO:0005737">
    <property type="term" value="C:cytoplasm"/>
    <property type="evidence" value="ECO:0007669"/>
    <property type="project" value="UniProtKB-SubCell"/>
</dbReference>
<dbReference type="GO" id="GO:0005509">
    <property type="term" value="F:calcium ion binding"/>
    <property type="evidence" value="ECO:0007669"/>
    <property type="project" value="InterPro"/>
</dbReference>
<dbReference type="FunFam" id="1.10.238.10:FF:000294">
    <property type="entry name" value="Calcyphosin"/>
    <property type="match status" value="1"/>
</dbReference>
<dbReference type="FunFam" id="1.10.238.10:FF:000329">
    <property type="entry name" value="calcyphosin isoform X2"/>
    <property type="match status" value="1"/>
</dbReference>
<dbReference type="Gene3D" id="1.10.238.10">
    <property type="entry name" value="EF-hand"/>
    <property type="match status" value="2"/>
</dbReference>
<dbReference type="InterPro" id="IPR051581">
    <property type="entry name" value="Ca-bind_SignalingProt"/>
</dbReference>
<dbReference type="InterPro" id="IPR011992">
    <property type="entry name" value="EF-hand-dom_pair"/>
</dbReference>
<dbReference type="InterPro" id="IPR018247">
    <property type="entry name" value="EF_Hand_1_Ca_BS"/>
</dbReference>
<dbReference type="InterPro" id="IPR002048">
    <property type="entry name" value="EF_hand_dom"/>
</dbReference>
<dbReference type="PANTHER" id="PTHR34524">
    <property type="entry name" value="CALCYPHOSIN"/>
    <property type="match status" value="1"/>
</dbReference>
<dbReference type="PANTHER" id="PTHR34524:SF2">
    <property type="entry name" value="CALCYPHOSIN"/>
    <property type="match status" value="1"/>
</dbReference>
<dbReference type="Pfam" id="PF13499">
    <property type="entry name" value="EF-hand_7"/>
    <property type="match status" value="2"/>
</dbReference>
<dbReference type="SMART" id="SM00054">
    <property type="entry name" value="EFh"/>
    <property type="match status" value="4"/>
</dbReference>
<dbReference type="SUPFAM" id="SSF47473">
    <property type="entry name" value="EF-hand"/>
    <property type="match status" value="1"/>
</dbReference>
<dbReference type="PROSITE" id="PS00018">
    <property type="entry name" value="EF_HAND_1"/>
    <property type="match status" value="3"/>
</dbReference>
<dbReference type="PROSITE" id="PS50222">
    <property type="entry name" value="EF_HAND_2"/>
    <property type="match status" value="4"/>
</dbReference>
<keyword id="KW-0106">Calcium</keyword>
<keyword id="KW-0963">Cytoplasm</keyword>
<keyword id="KW-0479">Metal-binding</keyword>
<keyword id="KW-0597">Phosphoprotein</keyword>
<keyword id="KW-1185">Reference proteome</keyword>
<keyword id="KW-0677">Repeat</keyword>
<gene>
    <name type="primary">CAPS</name>
</gene>
<comment type="function">
    <text evidence="5">Calcium-binding protein. May play a role in cellular signaling events (Potential).</text>
</comment>
<comment type="subunit">
    <text evidence="1">Monomer. Does not form oligomers in the presence of calcium (By similarity).</text>
</comment>
<comment type="subcellular location">
    <subcellularLocation>
        <location>Cytoplasm</location>
    </subcellularLocation>
</comment>
<comment type="tissue specificity">
    <text evidence="4">Detected in thyroid, salivary gland, lung, brain and cerebellum (at protein level).</text>
</comment>
<comment type="PTM">
    <text evidence="4">Phosphorylated in response to thyrotropin and cAMP.</text>
</comment>
<feature type="chain" id="PRO_0000073537" description="Calcyphosin">
    <location>
        <begin position="1"/>
        <end position="189"/>
    </location>
</feature>
<feature type="domain" description="EF-hand 1" evidence="3">
    <location>
        <begin position="21"/>
        <end position="56"/>
    </location>
</feature>
<feature type="domain" description="EF-hand 2" evidence="3">
    <location>
        <begin position="57"/>
        <end position="92"/>
    </location>
</feature>
<feature type="domain" description="EF-hand 3" evidence="3">
    <location>
        <begin position="93"/>
        <end position="128"/>
    </location>
</feature>
<feature type="domain" description="EF-hand 4" evidence="3">
    <location>
        <begin position="136"/>
        <end position="172"/>
    </location>
</feature>
<feature type="binding site" evidence="3">
    <location>
        <position position="34"/>
    </location>
    <ligand>
        <name>Ca(2+)</name>
        <dbReference type="ChEBI" id="CHEBI:29108"/>
        <label>1</label>
    </ligand>
</feature>
<feature type="binding site" evidence="3">
    <location>
        <position position="36"/>
    </location>
    <ligand>
        <name>Ca(2+)</name>
        <dbReference type="ChEBI" id="CHEBI:29108"/>
        <label>1</label>
    </ligand>
</feature>
<feature type="binding site" evidence="3">
    <location>
        <position position="38"/>
    </location>
    <ligand>
        <name>Ca(2+)</name>
        <dbReference type="ChEBI" id="CHEBI:29108"/>
        <label>1</label>
    </ligand>
</feature>
<feature type="binding site" evidence="3">
    <location>
        <position position="40"/>
    </location>
    <ligand>
        <name>Ca(2+)</name>
        <dbReference type="ChEBI" id="CHEBI:29108"/>
        <label>1</label>
    </ligand>
</feature>
<feature type="binding site" evidence="3">
    <location>
        <position position="45"/>
    </location>
    <ligand>
        <name>Ca(2+)</name>
        <dbReference type="ChEBI" id="CHEBI:29108"/>
        <label>1</label>
    </ligand>
</feature>
<feature type="binding site" evidence="3">
    <location>
        <position position="70"/>
    </location>
    <ligand>
        <name>Ca(2+)</name>
        <dbReference type="ChEBI" id="CHEBI:29108"/>
        <label>2</label>
    </ligand>
</feature>
<feature type="binding site" evidence="3">
    <location>
        <position position="72"/>
    </location>
    <ligand>
        <name>Ca(2+)</name>
        <dbReference type="ChEBI" id="CHEBI:29108"/>
        <label>2</label>
    </ligand>
</feature>
<feature type="binding site" evidence="3">
    <location>
        <position position="74"/>
    </location>
    <ligand>
        <name>Ca(2+)</name>
        <dbReference type="ChEBI" id="CHEBI:29108"/>
        <label>2</label>
    </ligand>
</feature>
<feature type="binding site" evidence="3">
    <location>
        <position position="76"/>
    </location>
    <ligand>
        <name>Ca(2+)</name>
        <dbReference type="ChEBI" id="CHEBI:29108"/>
        <label>2</label>
    </ligand>
</feature>
<feature type="binding site" evidence="3">
    <location>
        <position position="81"/>
    </location>
    <ligand>
        <name>Ca(2+)</name>
        <dbReference type="ChEBI" id="CHEBI:29108"/>
        <label>2</label>
    </ligand>
</feature>
<feature type="binding site" evidence="3">
    <location>
        <position position="106"/>
    </location>
    <ligand>
        <name>Ca(2+)</name>
        <dbReference type="ChEBI" id="CHEBI:29108"/>
        <label>3</label>
    </ligand>
</feature>
<feature type="binding site" evidence="3">
    <location>
        <position position="108"/>
    </location>
    <ligand>
        <name>Ca(2+)</name>
        <dbReference type="ChEBI" id="CHEBI:29108"/>
        <label>3</label>
    </ligand>
</feature>
<feature type="binding site" evidence="3">
    <location>
        <position position="110"/>
    </location>
    <ligand>
        <name>Ca(2+)</name>
        <dbReference type="ChEBI" id="CHEBI:29108"/>
        <label>3</label>
    </ligand>
</feature>
<feature type="binding site" evidence="3">
    <location>
        <position position="117"/>
    </location>
    <ligand>
        <name>Ca(2+)</name>
        <dbReference type="ChEBI" id="CHEBI:29108"/>
        <label>3</label>
    </ligand>
</feature>
<feature type="modified residue" description="Phosphoserine; by PKA" evidence="2">
    <location>
        <position position="40"/>
    </location>
</feature>
<name>CAYP1_CANLF</name>
<proteinExistence type="evidence at protein level"/>
<sequence length="189" mass="21132">MDAVDATVEKLRAQCLSRGALGIQGLARFFRRLDRDRSRSLDSRELQRGLAELGLVLDTAEAEGVCRRWDRDGSGTLDLEEFLRALRPPMSQAREAVIAAAFAKLDRSGDGVVTVDDLRGVYSGRTHPKVQSGEWTEEEVLRRFLDNFDSSEKDGQVTLAEFQDYYSGVSASMDTDEEFVAMMTSAWQL</sequence>
<evidence type="ECO:0000250" key="1"/>
<evidence type="ECO:0000255" key="2"/>
<evidence type="ECO:0000255" key="3">
    <source>
        <dbReference type="PROSITE-ProRule" id="PRU00448"/>
    </source>
</evidence>
<evidence type="ECO:0000269" key="4">
    <source>
    </source>
</evidence>
<evidence type="ECO:0000305" key="5"/>
<protein>
    <recommendedName>
        <fullName>Calcyphosin</fullName>
    </recommendedName>
    <alternativeName>
        <fullName>Calcyphosine</fullName>
    </alternativeName>
    <alternativeName>
        <fullName>Protein 5</fullName>
    </alternativeName>
    <alternativeName>
        <fullName>Thyroid protein p24</fullName>
        <shortName>TPP</shortName>
    </alternativeName>
</protein>
<organism>
    <name type="scientific">Canis lupus familiaris</name>
    <name type="common">Dog</name>
    <name type="synonym">Canis familiaris</name>
    <dbReference type="NCBI Taxonomy" id="9615"/>
    <lineage>
        <taxon>Eukaryota</taxon>
        <taxon>Metazoa</taxon>
        <taxon>Chordata</taxon>
        <taxon>Craniata</taxon>
        <taxon>Vertebrata</taxon>
        <taxon>Euteleostomi</taxon>
        <taxon>Mammalia</taxon>
        <taxon>Eutheria</taxon>
        <taxon>Laurasiatheria</taxon>
        <taxon>Carnivora</taxon>
        <taxon>Caniformia</taxon>
        <taxon>Canidae</taxon>
        <taxon>Canis</taxon>
    </lineage>
</organism>